<dbReference type="EMBL" id="AP006840">
    <property type="protein sequence ID" value="BAD42071.1"/>
    <property type="molecule type" value="Genomic_DNA"/>
</dbReference>
<dbReference type="RefSeq" id="WP_011197204.1">
    <property type="nucleotide sequence ID" value="NC_006177.1"/>
</dbReference>
<dbReference type="SMR" id="Q67JS9"/>
<dbReference type="STRING" id="292459.STH3089"/>
<dbReference type="KEGG" id="sth:STH3089"/>
<dbReference type="eggNOG" id="COG0081">
    <property type="taxonomic scope" value="Bacteria"/>
</dbReference>
<dbReference type="HOGENOM" id="CLU_062853_0_0_9"/>
<dbReference type="OrthoDB" id="9803740at2"/>
<dbReference type="Proteomes" id="UP000000417">
    <property type="component" value="Chromosome"/>
</dbReference>
<dbReference type="GO" id="GO:0015934">
    <property type="term" value="C:large ribosomal subunit"/>
    <property type="evidence" value="ECO:0007669"/>
    <property type="project" value="InterPro"/>
</dbReference>
<dbReference type="GO" id="GO:0019843">
    <property type="term" value="F:rRNA binding"/>
    <property type="evidence" value="ECO:0007669"/>
    <property type="project" value="UniProtKB-UniRule"/>
</dbReference>
<dbReference type="GO" id="GO:0003735">
    <property type="term" value="F:structural constituent of ribosome"/>
    <property type="evidence" value="ECO:0007669"/>
    <property type="project" value="InterPro"/>
</dbReference>
<dbReference type="GO" id="GO:0000049">
    <property type="term" value="F:tRNA binding"/>
    <property type="evidence" value="ECO:0007669"/>
    <property type="project" value="UniProtKB-KW"/>
</dbReference>
<dbReference type="GO" id="GO:0006417">
    <property type="term" value="P:regulation of translation"/>
    <property type="evidence" value="ECO:0007669"/>
    <property type="project" value="UniProtKB-KW"/>
</dbReference>
<dbReference type="GO" id="GO:0006412">
    <property type="term" value="P:translation"/>
    <property type="evidence" value="ECO:0007669"/>
    <property type="project" value="UniProtKB-UniRule"/>
</dbReference>
<dbReference type="CDD" id="cd00403">
    <property type="entry name" value="Ribosomal_L1"/>
    <property type="match status" value="1"/>
</dbReference>
<dbReference type="FunFam" id="3.40.50.790:FF:000001">
    <property type="entry name" value="50S ribosomal protein L1"/>
    <property type="match status" value="1"/>
</dbReference>
<dbReference type="Gene3D" id="3.30.190.20">
    <property type="match status" value="1"/>
</dbReference>
<dbReference type="Gene3D" id="3.40.50.790">
    <property type="match status" value="1"/>
</dbReference>
<dbReference type="HAMAP" id="MF_01318_B">
    <property type="entry name" value="Ribosomal_uL1_B"/>
    <property type="match status" value="1"/>
</dbReference>
<dbReference type="InterPro" id="IPR005878">
    <property type="entry name" value="Ribosom_uL1_bac-type"/>
</dbReference>
<dbReference type="InterPro" id="IPR002143">
    <property type="entry name" value="Ribosomal_uL1"/>
</dbReference>
<dbReference type="InterPro" id="IPR023674">
    <property type="entry name" value="Ribosomal_uL1-like"/>
</dbReference>
<dbReference type="InterPro" id="IPR028364">
    <property type="entry name" value="Ribosomal_uL1/biogenesis"/>
</dbReference>
<dbReference type="InterPro" id="IPR016095">
    <property type="entry name" value="Ribosomal_uL1_3-a/b-sand"/>
</dbReference>
<dbReference type="InterPro" id="IPR023673">
    <property type="entry name" value="Ribosomal_uL1_CS"/>
</dbReference>
<dbReference type="NCBIfam" id="TIGR01169">
    <property type="entry name" value="rplA_bact"/>
    <property type="match status" value="1"/>
</dbReference>
<dbReference type="PANTHER" id="PTHR36427">
    <property type="entry name" value="54S RIBOSOMAL PROTEIN L1, MITOCHONDRIAL"/>
    <property type="match status" value="1"/>
</dbReference>
<dbReference type="PANTHER" id="PTHR36427:SF3">
    <property type="entry name" value="LARGE RIBOSOMAL SUBUNIT PROTEIN UL1M"/>
    <property type="match status" value="1"/>
</dbReference>
<dbReference type="Pfam" id="PF00687">
    <property type="entry name" value="Ribosomal_L1"/>
    <property type="match status" value="1"/>
</dbReference>
<dbReference type="PIRSF" id="PIRSF002155">
    <property type="entry name" value="Ribosomal_L1"/>
    <property type="match status" value="1"/>
</dbReference>
<dbReference type="SUPFAM" id="SSF56808">
    <property type="entry name" value="Ribosomal protein L1"/>
    <property type="match status" value="1"/>
</dbReference>
<dbReference type="PROSITE" id="PS01199">
    <property type="entry name" value="RIBOSOMAL_L1"/>
    <property type="match status" value="1"/>
</dbReference>
<protein>
    <recommendedName>
        <fullName evidence="1">Large ribosomal subunit protein uL1</fullName>
    </recommendedName>
    <alternativeName>
        <fullName evidence="2">50S ribosomal protein L1</fullName>
    </alternativeName>
</protein>
<evidence type="ECO:0000255" key="1">
    <source>
        <dbReference type="HAMAP-Rule" id="MF_01318"/>
    </source>
</evidence>
<evidence type="ECO:0000305" key="2"/>
<accession>Q67JS9</accession>
<sequence length="235" mass="25035">MPKHGKKYRSAAALVDRNKLYDPMEALELVKKTATANFDETIEVAYRLGVDVRHADQQIRGAVVLPGGTGKEVKVLVFAKGEKAKEAEAAGADYVGAEDLVAKIQEGWLDFDVAVATPDMMSLVGRLGRILGPRGLMPNPKTGTVTFDVANAIQEIKAGKVEYRTDKAGIVAAPIGKASFDVERLAANFRALTEALLRAKPAAAKGQYMKSVTISATMGPGIKVNPARLTATAEK</sequence>
<comment type="function">
    <text evidence="1">Binds directly to 23S rRNA. The L1 stalk is quite mobile in the ribosome, and is involved in E site tRNA release.</text>
</comment>
<comment type="function">
    <text evidence="1">Protein L1 is also a translational repressor protein, it controls the translation of the L11 operon by binding to its mRNA.</text>
</comment>
<comment type="subunit">
    <text evidence="1">Part of the 50S ribosomal subunit.</text>
</comment>
<comment type="similarity">
    <text evidence="1">Belongs to the universal ribosomal protein uL1 family.</text>
</comment>
<gene>
    <name evidence="1" type="primary">rplA</name>
    <name type="ordered locus">STH3089</name>
</gene>
<keyword id="KW-1185">Reference proteome</keyword>
<keyword id="KW-0678">Repressor</keyword>
<keyword id="KW-0687">Ribonucleoprotein</keyword>
<keyword id="KW-0689">Ribosomal protein</keyword>
<keyword id="KW-0694">RNA-binding</keyword>
<keyword id="KW-0699">rRNA-binding</keyword>
<keyword id="KW-0810">Translation regulation</keyword>
<keyword id="KW-0820">tRNA-binding</keyword>
<name>RL1_SYMTH</name>
<proteinExistence type="inferred from homology"/>
<organism>
    <name type="scientific">Symbiobacterium thermophilum (strain DSM 24528 / JCM 14929 / IAM 14863 / T)</name>
    <dbReference type="NCBI Taxonomy" id="292459"/>
    <lineage>
        <taxon>Bacteria</taxon>
        <taxon>Bacillati</taxon>
        <taxon>Bacillota</taxon>
        <taxon>Clostridia</taxon>
        <taxon>Eubacteriales</taxon>
        <taxon>Symbiobacteriaceae</taxon>
        <taxon>Symbiobacterium</taxon>
    </lineage>
</organism>
<reference key="1">
    <citation type="journal article" date="2004" name="Nucleic Acids Res.">
        <title>Genome sequence of Symbiobacterium thermophilum, an uncultivable bacterium that depends on microbial commensalism.</title>
        <authorList>
            <person name="Ueda K."/>
            <person name="Yamashita A."/>
            <person name="Ishikawa J."/>
            <person name="Shimada M."/>
            <person name="Watsuji T."/>
            <person name="Morimura K."/>
            <person name="Ikeda H."/>
            <person name="Hattori M."/>
            <person name="Beppu T."/>
        </authorList>
    </citation>
    <scope>NUCLEOTIDE SEQUENCE [LARGE SCALE GENOMIC DNA]</scope>
    <source>
        <strain>DSM 24528 / JCM 14929 / IAM 14863 / T</strain>
    </source>
</reference>
<feature type="chain" id="PRO_0000125757" description="Large ribosomal subunit protein uL1">
    <location>
        <begin position="1"/>
        <end position="235"/>
    </location>
</feature>